<dbReference type="EC" id="4.2.1.82" evidence="4"/>
<dbReference type="EMBL" id="U70214">
    <property type="protein sequence ID" value="AAB08690.1"/>
    <property type="molecule type" value="Genomic_DNA"/>
</dbReference>
<dbReference type="EMBL" id="U00096">
    <property type="protein sequence ID" value="AAC73372.1"/>
    <property type="molecule type" value="Genomic_DNA"/>
</dbReference>
<dbReference type="EMBL" id="AP009048">
    <property type="protein sequence ID" value="BAE76053.1"/>
    <property type="molecule type" value="Genomic_DNA"/>
</dbReference>
<dbReference type="PIR" id="E64752">
    <property type="entry name" value="E64752"/>
</dbReference>
<dbReference type="RefSeq" id="NP_414803.1">
    <property type="nucleotide sequence ID" value="NC_000913.3"/>
</dbReference>
<dbReference type="RefSeq" id="WP_000151261.1">
    <property type="nucleotide sequence ID" value="NZ_LN832404.1"/>
</dbReference>
<dbReference type="SMR" id="P77596"/>
<dbReference type="BioGRID" id="4261825">
    <property type="interactions" value="9"/>
</dbReference>
<dbReference type="FunCoup" id="P77596">
    <property type="interactions" value="57"/>
</dbReference>
<dbReference type="STRING" id="511145.b0269"/>
<dbReference type="PaxDb" id="511145-b0269"/>
<dbReference type="EnsemblBacteria" id="AAC73372">
    <property type="protein sequence ID" value="AAC73372"/>
    <property type="gene ID" value="b0269"/>
</dbReference>
<dbReference type="GeneID" id="944928"/>
<dbReference type="KEGG" id="ecj:JW0262"/>
<dbReference type="KEGG" id="eco:b0269"/>
<dbReference type="KEGG" id="ecoc:C3026_01305"/>
<dbReference type="PATRIC" id="fig|511145.12.peg.273"/>
<dbReference type="EchoBASE" id="EB3129"/>
<dbReference type="eggNOG" id="COG0129">
    <property type="taxonomic scope" value="Bacteria"/>
</dbReference>
<dbReference type="HOGENOM" id="CLU_014271_5_0_6"/>
<dbReference type="InParanoid" id="P77596"/>
<dbReference type="OMA" id="MMFRNLA"/>
<dbReference type="OrthoDB" id="9807077at2"/>
<dbReference type="PhylomeDB" id="P77596"/>
<dbReference type="BioCyc" id="EcoCyc:G6141-MONOMER"/>
<dbReference type="BioCyc" id="MetaCyc:G6141-MONOMER"/>
<dbReference type="PRO" id="PR:P77596"/>
<dbReference type="Proteomes" id="UP000000625">
    <property type="component" value="Chromosome"/>
</dbReference>
<dbReference type="GO" id="GO:0005829">
    <property type="term" value="C:cytosol"/>
    <property type="evidence" value="ECO:0000318"/>
    <property type="project" value="GO_Central"/>
</dbReference>
<dbReference type="GO" id="GO:0016836">
    <property type="term" value="F:hydro-lyase activity"/>
    <property type="evidence" value="ECO:0000318"/>
    <property type="project" value="GO_Central"/>
</dbReference>
<dbReference type="GO" id="GO:0050401">
    <property type="term" value="F:xylonate dehydratase activity"/>
    <property type="evidence" value="ECO:0000314"/>
    <property type="project" value="EcoCyc"/>
</dbReference>
<dbReference type="GO" id="GO:0046176">
    <property type="term" value="P:aldonic acid catabolic process"/>
    <property type="evidence" value="ECO:0000315"/>
    <property type="project" value="EcoCyc"/>
</dbReference>
<dbReference type="FunFam" id="3.50.30.80:FF:000002">
    <property type="entry name" value="Dehydratase, YjhG/YagF family"/>
    <property type="match status" value="1"/>
</dbReference>
<dbReference type="Gene3D" id="3.50.30.80">
    <property type="entry name" value="IlvD/EDD C-terminal domain-like"/>
    <property type="match status" value="1"/>
</dbReference>
<dbReference type="InterPro" id="IPR017798">
    <property type="entry name" value="Dehydratase_YjhG/YagF"/>
</dbReference>
<dbReference type="InterPro" id="IPR042096">
    <property type="entry name" value="Dihydro-acid_dehy_C"/>
</dbReference>
<dbReference type="InterPro" id="IPR020558">
    <property type="entry name" value="DiOHA_6PGluconate_deHydtase_CS"/>
</dbReference>
<dbReference type="InterPro" id="IPR056740">
    <property type="entry name" value="ILV_EDD_C"/>
</dbReference>
<dbReference type="InterPro" id="IPR000581">
    <property type="entry name" value="ILV_EDD_N"/>
</dbReference>
<dbReference type="InterPro" id="IPR037237">
    <property type="entry name" value="IlvD/EDD_N"/>
</dbReference>
<dbReference type="NCBIfam" id="TIGR03432">
    <property type="entry name" value="yjhG_yagF"/>
    <property type="match status" value="1"/>
</dbReference>
<dbReference type="PANTHER" id="PTHR43661">
    <property type="entry name" value="D-XYLONATE DEHYDRATASE"/>
    <property type="match status" value="1"/>
</dbReference>
<dbReference type="PANTHER" id="PTHR43661:SF3">
    <property type="entry name" value="D-XYLONATE DEHYDRATASE YAGF-RELATED"/>
    <property type="match status" value="1"/>
</dbReference>
<dbReference type="Pfam" id="PF24877">
    <property type="entry name" value="ILV_EDD_C"/>
    <property type="match status" value="1"/>
</dbReference>
<dbReference type="Pfam" id="PF00920">
    <property type="entry name" value="ILVD_EDD_N"/>
    <property type="match status" value="1"/>
</dbReference>
<dbReference type="SUPFAM" id="SSF143975">
    <property type="entry name" value="IlvD/EDD N-terminal domain-like"/>
    <property type="match status" value="1"/>
</dbReference>
<dbReference type="SUPFAM" id="SSF52016">
    <property type="entry name" value="LeuD/IlvD-like"/>
    <property type="match status" value="1"/>
</dbReference>
<dbReference type="PROSITE" id="PS00886">
    <property type="entry name" value="ILVD_EDD_1"/>
    <property type="match status" value="1"/>
</dbReference>
<dbReference type="PROSITE" id="PS00887">
    <property type="entry name" value="ILVD_EDD_2"/>
    <property type="match status" value="1"/>
</dbReference>
<proteinExistence type="evidence at protein level"/>
<name>YAGF_ECOLI</name>
<feature type="chain" id="PRO_0000103560" description="D-xylonate dehydratase YagF">
    <location>
        <begin position="1"/>
        <end position="655"/>
    </location>
</feature>
<reference key="1">
    <citation type="submission" date="1997-01" db="EMBL/GenBank/DDBJ databases">
        <title>Sequence of minutes 4-25 of Escherichia coli.</title>
        <authorList>
            <person name="Chung E."/>
            <person name="Allen E."/>
            <person name="Araujo R."/>
            <person name="Aparicio A.M."/>
            <person name="Davis K."/>
            <person name="Duncan M."/>
            <person name="Federspiel N."/>
            <person name="Hyman R."/>
            <person name="Kalman S."/>
            <person name="Komp C."/>
            <person name="Kurdi O."/>
            <person name="Lew H."/>
            <person name="Lin D."/>
            <person name="Namath A."/>
            <person name="Oefner P."/>
            <person name="Roberts D."/>
            <person name="Schramm S."/>
            <person name="Davis R.W."/>
        </authorList>
    </citation>
    <scope>NUCLEOTIDE SEQUENCE [LARGE SCALE GENOMIC DNA]</scope>
    <source>
        <strain>K12 / MG1655 / ATCC 47076</strain>
    </source>
</reference>
<reference key="2">
    <citation type="journal article" date="1997" name="Science">
        <title>The complete genome sequence of Escherichia coli K-12.</title>
        <authorList>
            <person name="Blattner F.R."/>
            <person name="Plunkett G. III"/>
            <person name="Bloch C.A."/>
            <person name="Perna N.T."/>
            <person name="Burland V."/>
            <person name="Riley M."/>
            <person name="Collado-Vides J."/>
            <person name="Glasner J.D."/>
            <person name="Rode C.K."/>
            <person name="Mayhew G.F."/>
            <person name="Gregor J."/>
            <person name="Davis N.W."/>
            <person name="Kirkpatrick H.A."/>
            <person name="Goeden M.A."/>
            <person name="Rose D.J."/>
            <person name="Mau B."/>
            <person name="Shao Y."/>
        </authorList>
    </citation>
    <scope>NUCLEOTIDE SEQUENCE [LARGE SCALE GENOMIC DNA]</scope>
    <source>
        <strain>K12 / MG1655 / ATCC 47076</strain>
    </source>
</reference>
<reference key="3">
    <citation type="journal article" date="2006" name="Mol. Syst. Biol.">
        <title>Highly accurate genome sequences of Escherichia coli K-12 strains MG1655 and W3110.</title>
        <authorList>
            <person name="Hayashi K."/>
            <person name="Morooka N."/>
            <person name="Yamamoto Y."/>
            <person name="Fujita K."/>
            <person name="Isono K."/>
            <person name="Choi S."/>
            <person name="Ohtsubo E."/>
            <person name="Baba T."/>
            <person name="Wanner B.L."/>
            <person name="Mori H."/>
            <person name="Horiuchi T."/>
        </authorList>
    </citation>
    <scope>NUCLEOTIDE SEQUENCE [LARGE SCALE GENOMIC DNA]</scope>
    <source>
        <strain>K12 / W3110 / ATCC 27325 / DSM 5911</strain>
    </source>
</reference>
<reference key="4">
    <citation type="journal article" date="2013" name="Appl. Microbiol. Biotechnol.">
        <title>Biosynthesis of ethylene glycol in Escherichia coli.</title>
        <authorList>
            <person name="Liu H."/>
            <person name="Ramos K.R."/>
            <person name="Valdehuesa K.N."/>
            <person name="Nisola G.M."/>
            <person name="Lee W.K."/>
            <person name="Chung W.J."/>
        </authorList>
    </citation>
    <scope>FUNCTION</scope>
    <scope>CATALYTIC ACTIVITY</scope>
    <scope>DISRUPTION PHENOTYPE</scope>
    <source>
        <strain>K12 / W3110 / ATCC 27325 / DSM 5911</strain>
    </source>
</reference>
<reference key="5">
    <citation type="journal article" date="2017" name="FEMS Microbiol. Lett.">
        <title>Regulatory role of XynR (YagI) in catabolism of xylonate in Escherichia coli K-12.</title>
        <authorList>
            <person name="Shimada T."/>
            <person name="Momiyama E."/>
            <person name="Yamanaka Y."/>
            <person name="Watanabe H."/>
            <person name="Yamamoto K."/>
            <person name="Ishihama A."/>
        </authorList>
    </citation>
    <scope>INDUCTION</scope>
</reference>
<keyword id="KW-0456">Lyase</keyword>
<keyword id="KW-1185">Reference proteome</keyword>
<evidence type="ECO:0000269" key="1">
    <source>
    </source>
</evidence>
<evidence type="ECO:0000269" key="2">
    <source>
    </source>
</evidence>
<evidence type="ECO:0000305" key="3"/>
<evidence type="ECO:0000305" key="4">
    <source>
    </source>
</evidence>
<accession>P77596</accession>
<accession>Q2MCF3</accession>
<protein>
    <recommendedName>
        <fullName evidence="3">D-xylonate dehydratase YagF</fullName>
        <ecNumber evidence="4">4.2.1.82</ecNumber>
    </recommendedName>
</protein>
<organism>
    <name type="scientific">Escherichia coli (strain K12)</name>
    <dbReference type="NCBI Taxonomy" id="83333"/>
    <lineage>
        <taxon>Bacteria</taxon>
        <taxon>Pseudomonadati</taxon>
        <taxon>Pseudomonadota</taxon>
        <taxon>Gammaproteobacteria</taxon>
        <taxon>Enterobacterales</taxon>
        <taxon>Enterobacteriaceae</taxon>
        <taxon>Escherichia</taxon>
    </lineage>
</organism>
<gene>
    <name type="primary">yagF</name>
    <name type="ordered locus">b0269</name>
    <name type="ordered locus">JW0262</name>
</gene>
<comment type="function">
    <text evidence="4">Catalyzes the dehydration of D-xylonic acid to form 2-dehydro-3-deoxy-D-pentonate.</text>
</comment>
<comment type="catalytic activity">
    <reaction evidence="4">
        <text>D-xylonate = 2-dehydro-3-deoxy-D-arabinonate + H2O</text>
        <dbReference type="Rhea" id="RHEA:19157"/>
        <dbReference type="ChEBI" id="CHEBI:15377"/>
        <dbReference type="ChEBI" id="CHEBI:16699"/>
        <dbReference type="ChEBI" id="CHEBI:17746"/>
        <dbReference type="EC" id="4.2.1.82"/>
    </reaction>
</comment>
<comment type="induction">
    <text evidence="2">Expression is repressed by the transcriptional regulator XynR.</text>
</comment>
<comment type="disruption phenotype">
    <text evidence="1">Disruption mutant has reduced ability to catabolize D-xylonic acid. YjhG-yagF double mutant cannot use D-xylonate as the sole source of carbon.</text>
</comment>
<comment type="similarity">
    <text evidence="3">Belongs to the IlvD/Edd family.</text>
</comment>
<sequence length="655" mass="69399">MTIEKIFTPQDDAFYAVITHAAGPQGALPLTPQMLMESPSGNLFGMTQNAGMGWDANKLTGKEVLIIGTQGGIRAGDGRPIALGYHTGHWEIGMQMQAAAKEITRNGGIPFAAFVSDPCDGRSQGTHGMFDSLPYRNDAAIVFRRLIRSLPTRRAVIGVATCDKGLPATMIALAAMHDLPTILVPGGATLPPTVGEDAGKVQTIGARFANHELSLQEAAELGCRACASPGGGCQFLGTAGTSQVVAEALGLALPHSALAPSGQAVWLEIARQSARAVSELDSRGITTRDILSDKAIENAMVIHAAFGGSTNLLLHIPAIAHAAGCTIPDVEHWTRINRKVPRLVSVLPNGPDYHPTVRAFLAGGVPEVMLHLRDLGLLHLDAMTVTGQTVGENLEWWQASERRARFRQCLREQDGVEPDDVILPPEKAKAKGLTSTVCFPTGNIAPEGSVIKATAIDPSVVGEDGVYHHTGRVRVFVSEAQAIKAIKREEIVQGDIMVVIGGGPSGTGMEETYQLTSALKHISWGKTVSLITDARFSGVSTGACFGHVSPEALAGGPIGKLRDNDIIEIAVDRLTLTGSVNFIGTADNPLTPEEGARELARRQTHPDLHAHDFLPDDTRLWAALQSVSGGTWKGCIYDTDKIIEVINAGKKALGI</sequence>